<dbReference type="EC" id="3.6.4.13" evidence="1"/>
<dbReference type="EMBL" id="AL590449">
    <property type="protein sequence ID" value="CAD25763.1"/>
    <property type="molecule type" value="Genomic_DNA"/>
</dbReference>
<dbReference type="RefSeq" id="NP_586159.1">
    <property type="nucleotide sequence ID" value="NM_001041992.1"/>
</dbReference>
<dbReference type="SMR" id="Q8SR63"/>
<dbReference type="FunCoup" id="Q8SR63">
    <property type="interactions" value="310"/>
</dbReference>
<dbReference type="STRING" id="284813.Q8SR63"/>
<dbReference type="GeneID" id="859808"/>
<dbReference type="KEGG" id="ecu:ECU10_0440"/>
<dbReference type="VEuPathDB" id="MicrosporidiaDB:ECU10_0440"/>
<dbReference type="HOGENOM" id="CLU_003041_1_1_1"/>
<dbReference type="InParanoid" id="Q8SR63"/>
<dbReference type="OMA" id="GIGIKCC"/>
<dbReference type="OrthoDB" id="10261904at2759"/>
<dbReference type="Proteomes" id="UP000000819">
    <property type="component" value="Chromosome X"/>
</dbReference>
<dbReference type="GO" id="GO:0005829">
    <property type="term" value="C:cytosol"/>
    <property type="evidence" value="ECO:0007669"/>
    <property type="project" value="TreeGrafter"/>
</dbReference>
<dbReference type="GO" id="GO:0005634">
    <property type="term" value="C:nucleus"/>
    <property type="evidence" value="ECO:0007669"/>
    <property type="project" value="UniProtKB-SubCell"/>
</dbReference>
<dbReference type="GO" id="GO:0005524">
    <property type="term" value="F:ATP binding"/>
    <property type="evidence" value="ECO:0007669"/>
    <property type="project" value="UniProtKB-KW"/>
</dbReference>
<dbReference type="GO" id="GO:0016887">
    <property type="term" value="F:ATP hydrolysis activity"/>
    <property type="evidence" value="ECO:0007669"/>
    <property type="project" value="RHEA"/>
</dbReference>
<dbReference type="GO" id="GO:0003723">
    <property type="term" value="F:RNA binding"/>
    <property type="evidence" value="ECO:0007669"/>
    <property type="project" value="UniProtKB-KW"/>
</dbReference>
<dbReference type="GO" id="GO:0003724">
    <property type="term" value="F:RNA helicase activity"/>
    <property type="evidence" value="ECO:0007669"/>
    <property type="project" value="UniProtKB-EC"/>
</dbReference>
<dbReference type="GO" id="GO:0006364">
    <property type="term" value="P:rRNA processing"/>
    <property type="evidence" value="ECO:0007669"/>
    <property type="project" value="UniProtKB-KW"/>
</dbReference>
<dbReference type="CDD" id="cd00268">
    <property type="entry name" value="DEADc"/>
    <property type="match status" value="1"/>
</dbReference>
<dbReference type="CDD" id="cd18787">
    <property type="entry name" value="SF2_C_DEAD"/>
    <property type="match status" value="1"/>
</dbReference>
<dbReference type="Gene3D" id="3.40.50.300">
    <property type="entry name" value="P-loop containing nucleotide triphosphate hydrolases"/>
    <property type="match status" value="2"/>
</dbReference>
<dbReference type="InterPro" id="IPR011545">
    <property type="entry name" value="DEAD/DEAH_box_helicase_dom"/>
</dbReference>
<dbReference type="InterPro" id="IPR050079">
    <property type="entry name" value="DEAD_box_RNA_helicase"/>
</dbReference>
<dbReference type="InterPro" id="IPR014001">
    <property type="entry name" value="Helicase_ATP-bd"/>
</dbReference>
<dbReference type="InterPro" id="IPR001650">
    <property type="entry name" value="Helicase_C-like"/>
</dbReference>
<dbReference type="InterPro" id="IPR027417">
    <property type="entry name" value="P-loop_NTPase"/>
</dbReference>
<dbReference type="InterPro" id="IPR000629">
    <property type="entry name" value="RNA-helicase_DEAD-box_CS"/>
</dbReference>
<dbReference type="InterPro" id="IPR014014">
    <property type="entry name" value="RNA_helicase_DEAD_Q_motif"/>
</dbReference>
<dbReference type="PANTHER" id="PTHR47959:SF24">
    <property type="entry name" value="ATP-DEPENDENT RNA HELICASE"/>
    <property type="match status" value="1"/>
</dbReference>
<dbReference type="PANTHER" id="PTHR47959">
    <property type="entry name" value="ATP-DEPENDENT RNA HELICASE RHLE-RELATED"/>
    <property type="match status" value="1"/>
</dbReference>
<dbReference type="Pfam" id="PF00270">
    <property type="entry name" value="DEAD"/>
    <property type="match status" value="1"/>
</dbReference>
<dbReference type="Pfam" id="PF00271">
    <property type="entry name" value="Helicase_C"/>
    <property type="match status" value="1"/>
</dbReference>
<dbReference type="SMART" id="SM00487">
    <property type="entry name" value="DEXDc"/>
    <property type="match status" value="1"/>
</dbReference>
<dbReference type="SMART" id="SM00490">
    <property type="entry name" value="HELICc"/>
    <property type="match status" value="1"/>
</dbReference>
<dbReference type="SUPFAM" id="SSF52540">
    <property type="entry name" value="P-loop containing nucleoside triphosphate hydrolases"/>
    <property type="match status" value="1"/>
</dbReference>
<dbReference type="PROSITE" id="PS00039">
    <property type="entry name" value="DEAD_ATP_HELICASE"/>
    <property type="match status" value="1"/>
</dbReference>
<dbReference type="PROSITE" id="PS51192">
    <property type="entry name" value="HELICASE_ATP_BIND_1"/>
    <property type="match status" value="1"/>
</dbReference>
<dbReference type="PROSITE" id="PS51194">
    <property type="entry name" value="HELICASE_CTER"/>
    <property type="match status" value="1"/>
</dbReference>
<dbReference type="PROSITE" id="PS51195">
    <property type="entry name" value="Q_MOTIF"/>
    <property type="match status" value="1"/>
</dbReference>
<comment type="function">
    <text evidence="1">ATP-dependent rRNA helicase required for pre-ribosomal RNA processing. Involved in the maturation of the 35S-pre-rRNA and to its cleavage to mature 18S rRNA.</text>
</comment>
<comment type="catalytic activity">
    <reaction evidence="1">
        <text>ATP + H2O = ADP + phosphate + H(+)</text>
        <dbReference type="Rhea" id="RHEA:13065"/>
        <dbReference type="ChEBI" id="CHEBI:15377"/>
        <dbReference type="ChEBI" id="CHEBI:15378"/>
        <dbReference type="ChEBI" id="CHEBI:30616"/>
        <dbReference type="ChEBI" id="CHEBI:43474"/>
        <dbReference type="ChEBI" id="CHEBI:456216"/>
        <dbReference type="EC" id="3.6.4.13"/>
    </reaction>
</comment>
<comment type="subunit">
    <text evidence="1">Interacts with the SSU processome.</text>
</comment>
<comment type="subcellular location">
    <subcellularLocation>
        <location evidence="4">Nucleus</location>
    </subcellularLocation>
</comment>
<comment type="domain">
    <text evidence="4">The Q motif is unique to and characteristic of the DEAD box family of RNA helicases and controls ATP binding and hydrolysis.</text>
</comment>
<comment type="similarity">
    <text evidence="4">Belongs to the DEAD box helicase family. DDX47/RRP3 subfamily.</text>
</comment>
<accession>Q8SR63</accession>
<organism>
    <name type="scientific">Encephalitozoon cuniculi (strain GB-M1)</name>
    <name type="common">Microsporidian parasite</name>
    <dbReference type="NCBI Taxonomy" id="284813"/>
    <lineage>
        <taxon>Eukaryota</taxon>
        <taxon>Fungi</taxon>
        <taxon>Fungi incertae sedis</taxon>
        <taxon>Microsporidia</taxon>
        <taxon>Unikaryonidae</taxon>
        <taxon>Encephalitozoon</taxon>
    </lineage>
</organism>
<proteinExistence type="inferred from homology"/>
<sequence>MEFGDLRIDESLIKTCQEKGITRPTEVQRQVIPAVLGGGDVIAVSQTGSGKTLAFVLPIVSHLLQKNRSFYCLVVAPTRELSSQIAECFNMFQATGLRVCLLVGGANFNVQANQLSKRPHVVVGTPGRIAEHVLKTKSFRTERVRKFVLDEADRFFEQDFVEDLETIIPSLREKRQTLLFTATMSDEISKLSSSILKRPKTIRTAEKYETVPALKEYYLFVAMKWKNSALVELLEMSQGMSVIVFVSMCVTARVMSLALARLGFCSEALHGELSQEKREEAMRSFKESRFNVLVCTDLGSRGLDISHVDLVINFDVPKSGKDYIHRVGRTARAGRSGTAITLVTQYDVEQIQKIEFTLEKKLEEFKMMKKNFGTICARIEEAIQEAQETLKEERKRNRRP</sequence>
<keyword id="KW-0067">ATP-binding</keyword>
<keyword id="KW-0347">Helicase</keyword>
<keyword id="KW-0378">Hydrolase</keyword>
<keyword id="KW-0547">Nucleotide-binding</keyword>
<keyword id="KW-0539">Nucleus</keyword>
<keyword id="KW-1185">Reference proteome</keyword>
<keyword id="KW-0690">Ribosome biogenesis</keyword>
<keyword id="KW-0694">RNA-binding</keyword>
<keyword id="KW-0698">rRNA processing</keyword>
<gene>
    <name evidence="1" type="primary">RRP3</name>
    <name type="ordered locus">ECU10_0440</name>
</gene>
<protein>
    <recommendedName>
        <fullName evidence="4">ATP-dependent rRNA helicase RRP3</fullName>
        <ecNumber evidence="1">3.6.4.13</ecNumber>
    </recommendedName>
</protein>
<reference key="1">
    <citation type="journal article" date="2001" name="Nature">
        <title>Genome sequence and gene compaction of the eukaryote parasite Encephalitozoon cuniculi.</title>
        <authorList>
            <person name="Katinka M.D."/>
            <person name="Duprat S."/>
            <person name="Cornillot E."/>
            <person name="Metenier G."/>
            <person name="Thomarat F."/>
            <person name="Prensier G."/>
            <person name="Barbe V."/>
            <person name="Peyretaillade E."/>
            <person name="Brottier P."/>
            <person name="Wincker P."/>
            <person name="Delbac F."/>
            <person name="El Alaoui H."/>
            <person name="Peyret P."/>
            <person name="Saurin W."/>
            <person name="Gouy M."/>
            <person name="Weissenbach J."/>
            <person name="Vivares C.P."/>
        </authorList>
    </citation>
    <scope>NUCLEOTIDE SEQUENCE [LARGE SCALE GENOMIC DNA]</scope>
    <source>
        <strain>GB-M1</strain>
    </source>
</reference>
<name>RRP3_ENCCU</name>
<evidence type="ECO:0000250" key="1">
    <source>
        <dbReference type="UniProtKB" id="P38712"/>
    </source>
</evidence>
<evidence type="ECO:0000255" key="2">
    <source>
        <dbReference type="PROSITE-ProRule" id="PRU00541"/>
    </source>
</evidence>
<evidence type="ECO:0000255" key="3">
    <source>
        <dbReference type="PROSITE-ProRule" id="PRU00542"/>
    </source>
</evidence>
<evidence type="ECO:0000305" key="4"/>
<feature type="chain" id="PRO_0000256036" description="ATP-dependent rRNA helicase RRP3">
    <location>
        <begin position="1"/>
        <end position="400"/>
    </location>
</feature>
<feature type="domain" description="Helicase ATP-binding" evidence="2">
    <location>
        <begin position="32"/>
        <end position="202"/>
    </location>
</feature>
<feature type="domain" description="Helicase C-terminal" evidence="3">
    <location>
        <begin position="229"/>
        <end position="373"/>
    </location>
</feature>
<feature type="short sequence motif" description="Q motif" evidence="4">
    <location>
        <begin position="1"/>
        <end position="29"/>
    </location>
</feature>
<feature type="short sequence motif" description="DEAD box" evidence="4">
    <location>
        <begin position="150"/>
        <end position="153"/>
    </location>
</feature>
<feature type="binding site" evidence="2">
    <location>
        <begin position="45"/>
        <end position="52"/>
    </location>
    <ligand>
        <name>ATP</name>
        <dbReference type="ChEBI" id="CHEBI:30616"/>
    </ligand>
</feature>